<dbReference type="EC" id="3.4.24.-"/>
<dbReference type="EMBL" id="AF226274">
    <property type="protein sequence ID" value="AAF28364.1"/>
    <property type="molecule type" value="mRNA"/>
</dbReference>
<dbReference type="SMR" id="Q9I9R4"/>
<dbReference type="BindingDB" id="Q9I9R4"/>
<dbReference type="ChEMBL" id="CHEMBL4295953"/>
<dbReference type="MEROPS" id="M12.312"/>
<dbReference type="GO" id="GO:0005576">
    <property type="term" value="C:extracellular region"/>
    <property type="evidence" value="ECO:0007669"/>
    <property type="project" value="UniProtKB-SubCell"/>
</dbReference>
<dbReference type="GO" id="GO:0005886">
    <property type="term" value="C:plasma membrane"/>
    <property type="evidence" value="ECO:0007669"/>
    <property type="project" value="TreeGrafter"/>
</dbReference>
<dbReference type="GO" id="GO:0046872">
    <property type="term" value="F:metal ion binding"/>
    <property type="evidence" value="ECO:0007669"/>
    <property type="project" value="UniProtKB-KW"/>
</dbReference>
<dbReference type="GO" id="GO:0004222">
    <property type="term" value="F:metalloendopeptidase activity"/>
    <property type="evidence" value="ECO:0007669"/>
    <property type="project" value="InterPro"/>
</dbReference>
<dbReference type="GO" id="GO:0090729">
    <property type="term" value="F:toxin activity"/>
    <property type="evidence" value="ECO:0007669"/>
    <property type="project" value="UniProtKB-KW"/>
</dbReference>
<dbReference type="GO" id="GO:0006508">
    <property type="term" value="P:proteolysis"/>
    <property type="evidence" value="ECO:0007669"/>
    <property type="project" value="UniProtKB-KW"/>
</dbReference>
<dbReference type="CDD" id="cd04269">
    <property type="entry name" value="ZnMc_adamalysin_II_like"/>
    <property type="match status" value="1"/>
</dbReference>
<dbReference type="FunFam" id="3.40.390.10:FF:000002">
    <property type="entry name" value="Disintegrin and metalloproteinase domain-containing protein 22"/>
    <property type="match status" value="1"/>
</dbReference>
<dbReference type="Gene3D" id="3.40.390.10">
    <property type="entry name" value="Collagenase (Catalytic Domain)"/>
    <property type="match status" value="1"/>
</dbReference>
<dbReference type="InterPro" id="IPR024079">
    <property type="entry name" value="MetalloPept_cat_dom_sf"/>
</dbReference>
<dbReference type="InterPro" id="IPR001590">
    <property type="entry name" value="Peptidase_M12B"/>
</dbReference>
<dbReference type="InterPro" id="IPR034027">
    <property type="entry name" value="Reprolysin_adamalysin"/>
</dbReference>
<dbReference type="PANTHER" id="PTHR11905">
    <property type="entry name" value="ADAM A DISINTEGRIN AND METALLOPROTEASE DOMAIN"/>
    <property type="match status" value="1"/>
</dbReference>
<dbReference type="PANTHER" id="PTHR11905:SF32">
    <property type="entry name" value="DISINTEGRIN AND METALLOPROTEINASE DOMAIN-CONTAINING PROTEIN 28"/>
    <property type="match status" value="1"/>
</dbReference>
<dbReference type="Pfam" id="PF01421">
    <property type="entry name" value="Reprolysin"/>
    <property type="match status" value="1"/>
</dbReference>
<dbReference type="SUPFAM" id="SSF55486">
    <property type="entry name" value="Metalloproteases ('zincins'), catalytic domain"/>
    <property type="match status" value="1"/>
</dbReference>
<dbReference type="PROSITE" id="PS50215">
    <property type="entry name" value="ADAM_MEPRO"/>
    <property type="match status" value="1"/>
</dbReference>
<dbReference type="PROSITE" id="PS00142">
    <property type="entry name" value="ZINC_PROTEASE"/>
    <property type="match status" value="1"/>
</dbReference>
<accession>Q9I9R4</accession>
<name>VM1N_BOTPA</name>
<reference key="1">
    <citation type="journal article" date="2000" name="Arch. Biochem. Biophys.">
        <title>Structural and functional characterization of neuwiedase, a nonhemorrhagic fibrin(ogen)olytic metalloprotease from Bothrops neuwiedi snake venom.</title>
        <authorList>
            <person name="Rodrigues V.M."/>
            <person name="Soares A.M."/>
            <person name="Guerra-Sa R."/>
            <person name="Rodrigues V."/>
            <person name="Fontes M.R.M."/>
            <person name="Giglio J.R."/>
        </authorList>
    </citation>
    <scope>NUCLEOTIDE SEQUENCE [MRNA]</scope>
    <scope>PROTEIN SEQUENCE OF 1-20 AND 141-155</scope>
    <scope>FUNCTION</scope>
    <scope>CATALYTIC ACTIVITY</scope>
    <scope>ACTIVITY REGULATION</scope>
    <scope>BIOPHYSICOCHEMICAL PROPERTIES</scope>
    <scope>3D-STRUCTURE MODELING</scope>
    <scope>SUBCELLULAR LOCATION</scope>
    <source>
        <tissue>Venom</tissue>
        <tissue>Venom gland</tissue>
    </source>
</reference>
<reference key="2">
    <citation type="journal article" date="2001" name="Biochimie">
        <title>Pathological alterations induced by neuwiedase, a metalloproteinase isolated from Bothrops neuwiedi snake venom.</title>
        <authorList>
            <person name="Rodrigues V.M."/>
            <person name="Soares A.M."/>
            <person name="Andriao-Escarso S.H."/>
            <person name="Franceschi A.M."/>
            <person name="Rucavado A."/>
            <person name="Gutierrez J.M."/>
            <person name="Giglio J.R."/>
        </authorList>
    </citation>
    <scope>FUNCTION</scope>
    <scope>TOXIC DOSE</scope>
    <source>
        <tissue>Venom</tissue>
    </source>
</reference>
<reference key="3">
    <citation type="journal article" date="2003" name="Biochimie">
        <title>Neutralization of some hematological and hemostatic alterations induced by neuwiedase, a metalloproteinase isolated from Bothrops neuwiedi pauloensis snake venom, by the aqueous extract from Casearia mariquitensis (Flacourtiaceae).</title>
        <authorList>
            <person name="Izidoro L.F.M."/>
            <person name="Rodrigues V.M."/>
            <person name="Rodrigues R.S."/>
            <person name="Ferro E.V."/>
            <person name="Hamaguchi A."/>
            <person name="Giglio J.R."/>
            <person name="Homsi-Brandeburgo M.I."/>
        </authorList>
    </citation>
    <scope>FUNCTION</scope>
    <scope>ACTIVITY REGULATION</scope>
    <source>
        <tissue>Venom</tissue>
    </source>
</reference>
<organism>
    <name type="scientific">Bothrops pauloensis</name>
    <name type="common">Neuwied's lancehead</name>
    <name type="synonym">Bothrops neuwiedi pauloensis</name>
    <dbReference type="NCBI Taxonomy" id="1042543"/>
    <lineage>
        <taxon>Eukaryota</taxon>
        <taxon>Metazoa</taxon>
        <taxon>Chordata</taxon>
        <taxon>Craniata</taxon>
        <taxon>Vertebrata</taxon>
        <taxon>Euteleostomi</taxon>
        <taxon>Lepidosauria</taxon>
        <taxon>Squamata</taxon>
        <taxon>Bifurcata</taxon>
        <taxon>Unidentata</taxon>
        <taxon>Episquamata</taxon>
        <taxon>Toxicofera</taxon>
        <taxon>Serpentes</taxon>
        <taxon>Colubroidea</taxon>
        <taxon>Viperidae</taxon>
        <taxon>Crotalinae</taxon>
        <taxon>Bothrops</taxon>
    </lineage>
</organism>
<comment type="function">
    <text evidence="4 5 6">This metalloprotease hydrolyzes the Aalpha chain of fibrin and fibrinogen first followed by the Bbeta chain and shows no effect on the gamma chain. It is also able to degrade type I collagen, fibronectin, laminin and induces inflammatory reaction. It is devoid of hemorrhagic and thrombotic activities, except in lung where it induces pulmonary bleeding. It also induces a mild myotoxic reaction. It is not able to inhibit platelet aggregation, but it induces decrease of platelets and plasma fibrinogen. It contributes to local tissue damage by inducing edema, inflammatory infiltrate and mild myotoxicity, and by degrading extracellular matrix components.</text>
</comment>
<comment type="cofactor">
    <cofactor evidence="1">
        <name>Zn(2+)</name>
        <dbReference type="ChEBI" id="CHEBI:29105"/>
    </cofactor>
    <text evidence="1">Binds 1 zinc ion per subunit.</text>
</comment>
<comment type="activity regulation">
    <text evidence="4 6">Inhibited by EDTA, EGTA and 1,10-phenanthroline, partially inhibited by beta-mercaptoethanol and not inhibited by serine protease inhibitors (leupeptin and aprotinin). Also inhibited by an excess of zinc, mercury and magnesium ions. Extracts of the plant Casearia mariquitensis neutralizes the decrease of platelets and plasma fibrinogen induced by the protease. The same extracts also partially inhibit Bbeta chain cleavage, but not Aalpha chain cleavage.</text>
</comment>
<comment type="biophysicochemical properties">
    <phDependence>
        <text evidence="4">Optimum pH is 7.4-8.0.</text>
    </phDependence>
    <temperatureDependence>
        <text evidence="4">Optimum temperature is 37 degrees Celsius.</text>
    </temperatureDependence>
</comment>
<comment type="subcellular location">
    <subcellularLocation>
        <location evidence="4">Secreted</location>
    </subcellularLocation>
</comment>
<comment type="tissue specificity">
    <text evidence="10">Expressed by the venom gland.</text>
</comment>
<comment type="toxic dose">
    <text evidence="5">LD(50) is 5 mg/kg by intravenous injection into mice.</text>
</comment>
<comment type="similarity">
    <text evidence="9">Belongs to the venom metalloproteinase (M12B) family. P-I subfamily.</text>
</comment>
<sequence length="198" mass="22524">QQRFFPQRYIELVIVADRRMYTKYNSDSNKIRTRVHELVNTVNGFFRSMNVDASLANLEVWSKKDLIKVEKDSSKTLTSFGEWRERDLLRRKSHDNAQLLTAIDFNGNTIGRAYLGSMCNPKRSVGIVQDHSPINLLVGVTMAHELGHNLGMEHDGKDCLCGASLCIMSPGLTDGPSYEFSDCSKDYYQTFLTNHNPQ</sequence>
<evidence type="ECO:0000250" key="1"/>
<evidence type="ECO:0000255" key="2">
    <source>
        <dbReference type="PROSITE-ProRule" id="PRU00276"/>
    </source>
</evidence>
<evidence type="ECO:0000255" key="3">
    <source>
        <dbReference type="PROSITE-ProRule" id="PRU10095"/>
    </source>
</evidence>
<evidence type="ECO:0000269" key="4">
    <source>
    </source>
</evidence>
<evidence type="ECO:0000269" key="5">
    <source>
    </source>
</evidence>
<evidence type="ECO:0000269" key="6">
    <source>
    </source>
</evidence>
<evidence type="ECO:0000303" key="7">
    <source>
    </source>
</evidence>
<evidence type="ECO:0000303" key="8">
    <source>
    </source>
</evidence>
<evidence type="ECO:0000305" key="9"/>
<evidence type="ECO:0000305" key="10">
    <source>
    </source>
</evidence>
<feature type="chain" id="PRO_0000326273" description="Snake venom metalloproteinase neuwiedase">
    <location>
        <begin position="1"/>
        <end position="198" status="greater than"/>
    </location>
</feature>
<feature type="domain" description="Peptidase M12B" evidence="2">
    <location>
        <begin position="8"/>
        <end position="198" status="greater than"/>
    </location>
</feature>
<feature type="active site" evidence="2 3">
    <location>
        <position position="145"/>
    </location>
</feature>
<feature type="binding site" evidence="1">
    <location>
        <position position="11"/>
    </location>
    <ligand>
        <name>Ca(2+)</name>
        <dbReference type="ChEBI" id="CHEBI:29108"/>
    </ligand>
</feature>
<feature type="binding site" evidence="1">
    <location>
        <position position="95"/>
    </location>
    <ligand>
        <name>Ca(2+)</name>
        <dbReference type="ChEBI" id="CHEBI:29108"/>
    </ligand>
</feature>
<feature type="binding site" evidence="1">
    <location>
        <position position="144"/>
    </location>
    <ligand>
        <name>Zn(2+)</name>
        <dbReference type="ChEBI" id="CHEBI:29105"/>
        <note>catalytic</note>
    </ligand>
</feature>
<feature type="binding site" evidence="1">
    <location>
        <position position="148"/>
    </location>
    <ligand>
        <name>Zn(2+)</name>
        <dbReference type="ChEBI" id="CHEBI:29105"/>
        <note>catalytic</note>
    </ligand>
</feature>
<feature type="binding site" evidence="1">
    <location>
        <position position="154"/>
    </location>
    <ligand>
        <name>Zn(2+)</name>
        <dbReference type="ChEBI" id="CHEBI:29105"/>
        <note>catalytic</note>
    </ligand>
</feature>
<feature type="disulfide bond" evidence="2">
    <location>
        <begin position="159"/>
        <end position="183"/>
    </location>
</feature>
<feature type="disulfide bond" evidence="2">
    <location>
        <begin position="161"/>
        <end position="166"/>
    </location>
</feature>
<feature type="non-terminal residue">
    <location>
        <position position="198"/>
    </location>
</feature>
<protein>
    <recommendedName>
        <fullName evidence="7 8">Snake venom metalloproteinase neuwiedase</fullName>
        <shortName>SVMP</shortName>
        <ecNumber>3.4.24.-</ecNumber>
    </recommendedName>
</protein>
<proteinExistence type="evidence at protein level"/>
<keyword id="KW-0106">Calcium</keyword>
<keyword id="KW-0903">Direct protein sequencing</keyword>
<keyword id="KW-1015">Disulfide bond</keyword>
<keyword id="KW-1206">Fibrinogenolytic toxin</keyword>
<keyword id="KW-1205">Fibrinolytic toxin</keyword>
<keyword id="KW-1199">Hemostasis impairing toxin</keyword>
<keyword id="KW-0378">Hydrolase</keyword>
<keyword id="KW-0479">Metal-binding</keyword>
<keyword id="KW-0482">Metalloprotease</keyword>
<keyword id="KW-0959">Myotoxin</keyword>
<keyword id="KW-0645">Protease</keyword>
<keyword id="KW-0964">Secreted</keyword>
<keyword id="KW-0800">Toxin</keyword>
<keyword id="KW-0862">Zinc</keyword>